<feature type="initiator methionine" description="Removed" evidence="2">
    <location>
        <position position="1"/>
    </location>
</feature>
<feature type="chain" id="PRO_0000154726" description="Large ribosomal subunit protein uL10">
    <location>
        <begin position="2"/>
        <end position="166"/>
    </location>
</feature>
<evidence type="ECO:0000250" key="1"/>
<evidence type="ECO:0000269" key="2">
    <source ref="2"/>
</evidence>
<evidence type="ECO:0000305" key="3"/>
<proteinExistence type="evidence at protein level"/>
<gene>
    <name type="primary">rplJ</name>
    <name type="ordered locus">M6_Spy0813</name>
</gene>
<sequence>MSEAIIAKKAEQVELIAEKMKAAASIVVVDSRGLTVDQDTVLRRSLRESGVEFKVIKNSILTRAAEKAGLDELKDVFVGPSAVAFSNEDVIAPAKVINDFTKTADALEIKGGAIEGAVSSKEEIQALATLPNREGMLSMLLSVLQAPVRNVAYAVKAVAENKEGAA</sequence>
<reference key="1">
    <citation type="journal article" date="2004" name="J. Infect. Dis.">
        <title>Progress toward characterization of the group A Streptococcus metagenome: complete genome sequence of a macrolide-resistant serotype M6 strain.</title>
        <authorList>
            <person name="Banks D.J."/>
            <person name="Porcella S.F."/>
            <person name="Barbian K.D."/>
            <person name="Beres S.B."/>
            <person name="Philips L.E."/>
            <person name="Voyich J.M."/>
            <person name="DeLeo F.R."/>
            <person name="Martin J.M."/>
            <person name="Somerville G.A."/>
            <person name="Musser J.M."/>
        </authorList>
    </citation>
    <scope>NUCLEOTIDE SEQUENCE [LARGE SCALE GENOMIC DNA]</scope>
    <source>
        <strain>ATCC BAA-946 / MGAS10394</strain>
    </source>
</reference>
<reference key="2">
    <citation type="submission" date="2000-05" db="UniProtKB">
        <title>Two-dimensional gel electrophoresis map of Streptococcus pyogenes proteins.</title>
        <authorList>
            <person name="Hogan D.A."/>
            <person name="Du P."/>
            <person name="Stevenson T.I."/>
            <person name="Whitton M."/>
            <person name="Kilby G.W."/>
            <person name="Rogers J."/>
            <person name="VanBogelen R.A."/>
        </authorList>
    </citation>
    <scope>PROTEIN SEQUENCE OF 2-19; 33-44; 58-63; 68-95 AND 111-149</scope>
    <scope>IDENTIFICATION BY MASS SPECTROMETRY</scope>
    <source>
        <strain>JRS4 / Serotype M6</strain>
    </source>
</reference>
<protein>
    <recommendedName>
        <fullName evidence="3">Large ribosomal subunit protein uL10</fullName>
    </recommendedName>
    <alternativeName>
        <fullName>50S ribosomal protein L10</fullName>
    </alternativeName>
</protein>
<comment type="function">
    <text evidence="1">Forms part of the ribosomal stalk, playing a central role in the interaction of the ribosome with GTP-bound translation factors.</text>
</comment>
<comment type="subunit">
    <text evidence="1">Part of the ribosomal stalk of the 50S ribosomal subunit. The N-terminus interacts with L11 and the large rRNA to form the base of the stalk. The C-terminus forms an elongated spine to which L12 dimers bind in a sequential fashion forming a multimeric L10(L12)X complex (By similarity).</text>
</comment>
<comment type="similarity">
    <text evidence="3">Belongs to the universal ribosomal protein uL10 family.</text>
</comment>
<comment type="sequence caution" evidence="3">
    <conflict type="erroneous initiation">
        <sequence resource="EMBL-CDS" id="AAT86948"/>
    </conflict>
</comment>
<accession>Q5XCB5</accession>
<accession>P82480</accession>
<keyword id="KW-0903">Direct protein sequencing</keyword>
<keyword id="KW-0687">Ribonucleoprotein</keyword>
<keyword id="KW-0689">Ribosomal protein</keyword>
<keyword id="KW-0694">RNA-binding</keyword>
<keyword id="KW-0699">rRNA-binding</keyword>
<name>RL10_STRP6</name>
<dbReference type="EMBL" id="CP000003">
    <property type="protein sequence ID" value="AAT86948.1"/>
    <property type="status" value="ALT_INIT"/>
    <property type="molecule type" value="Genomic_DNA"/>
</dbReference>
<dbReference type="RefSeq" id="WP_002984821.1">
    <property type="nucleotide sequence ID" value="NC_006086.1"/>
</dbReference>
<dbReference type="SMR" id="Q5XCB5"/>
<dbReference type="GeneID" id="69900916"/>
<dbReference type="KEGG" id="spa:M6_Spy0813"/>
<dbReference type="HOGENOM" id="CLU_092227_2_0_9"/>
<dbReference type="Proteomes" id="UP000001167">
    <property type="component" value="Chromosome"/>
</dbReference>
<dbReference type="GO" id="GO:0015934">
    <property type="term" value="C:large ribosomal subunit"/>
    <property type="evidence" value="ECO:0007669"/>
    <property type="project" value="InterPro"/>
</dbReference>
<dbReference type="GO" id="GO:0070180">
    <property type="term" value="F:large ribosomal subunit rRNA binding"/>
    <property type="evidence" value="ECO:0007669"/>
    <property type="project" value="UniProtKB-UniRule"/>
</dbReference>
<dbReference type="GO" id="GO:0003735">
    <property type="term" value="F:structural constituent of ribosome"/>
    <property type="evidence" value="ECO:0007669"/>
    <property type="project" value="InterPro"/>
</dbReference>
<dbReference type="GO" id="GO:0006412">
    <property type="term" value="P:translation"/>
    <property type="evidence" value="ECO:0007669"/>
    <property type="project" value="UniProtKB-UniRule"/>
</dbReference>
<dbReference type="CDD" id="cd05797">
    <property type="entry name" value="Ribosomal_L10"/>
    <property type="match status" value="1"/>
</dbReference>
<dbReference type="FunFam" id="3.30.70.1730:FF:000001">
    <property type="entry name" value="50S ribosomal protein L10"/>
    <property type="match status" value="1"/>
</dbReference>
<dbReference type="Gene3D" id="3.30.70.1730">
    <property type="match status" value="1"/>
</dbReference>
<dbReference type="HAMAP" id="MF_00362">
    <property type="entry name" value="Ribosomal_uL10"/>
    <property type="match status" value="1"/>
</dbReference>
<dbReference type="InterPro" id="IPR001790">
    <property type="entry name" value="Ribosomal_uL10"/>
</dbReference>
<dbReference type="InterPro" id="IPR043141">
    <property type="entry name" value="Ribosomal_uL10-like_sf"/>
</dbReference>
<dbReference type="InterPro" id="IPR022973">
    <property type="entry name" value="Ribosomal_uL10_bac"/>
</dbReference>
<dbReference type="InterPro" id="IPR047865">
    <property type="entry name" value="Ribosomal_uL10_bac_type"/>
</dbReference>
<dbReference type="InterPro" id="IPR002363">
    <property type="entry name" value="Ribosomal_uL10_CS_bac"/>
</dbReference>
<dbReference type="NCBIfam" id="NF000955">
    <property type="entry name" value="PRK00099.1-1"/>
    <property type="match status" value="1"/>
</dbReference>
<dbReference type="PANTHER" id="PTHR11560">
    <property type="entry name" value="39S RIBOSOMAL PROTEIN L10, MITOCHONDRIAL"/>
    <property type="match status" value="1"/>
</dbReference>
<dbReference type="Pfam" id="PF00466">
    <property type="entry name" value="Ribosomal_L10"/>
    <property type="match status" value="1"/>
</dbReference>
<dbReference type="SUPFAM" id="SSF160369">
    <property type="entry name" value="Ribosomal protein L10-like"/>
    <property type="match status" value="1"/>
</dbReference>
<dbReference type="PROSITE" id="PS01109">
    <property type="entry name" value="RIBOSOMAL_L10"/>
    <property type="match status" value="1"/>
</dbReference>
<organism>
    <name type="scientific">Streptococcus pyogenes serotype M6 (strain ATCC BAA-946 / MGAS10394)</name>
    <dbReference type="NCBI Taxonomy" id="286636"/>
    <lineage>
        <taxon>Bacteria</taxon>
        <taxon>Bacillati</taxon>
        <taxon>Bacillota</taxon>
        <taxon>Bacilli</taxon>
        <taxon>Lactobacillales</taxon>
        <taxon>Streptococcaceae</taxon>
        <taxon>Streptococcus</taxon>
    </lineage>
</organism>